<comment type="function">
    <text evidence="1">Required for formate dehydrogenase (FDH) activity. Acts as a sulfur carrier protein that transfers sulfur from IscS to the molybdenum cofactor prior to its insertion into FDH.</text>
</comment>
<comment type="subcellular location">
    <subcellularLocation>
        <location evidence="1">Cytoplasm</location>
    </subcellularLocation>
</comment>
<comment type="similarity">
    <text evidence="1">Belongs to the FdhD family.</text>
</comment>
<feature type="chain" id="PRO_1000020828" description="Sulfur carrier protein FdhD">
    <location>
        <begin position="1"/>
        <end position="281"/>
    </location>
</feature>
<feature type="active site" description="Cysteine persulfide intermediate" evidence="1">
    <location>
        <position position="117"/>
    </location>
</feature>
<protein>
    <recommendedName>
        <fullName evidence="1">Sulfur carrier protein FdhD</fullName>
    </recommendedName>
</protein>
<sequence length="281" mass="29650">MTGQPSTPVRPGSVVRTVRRHRGGRSATVQDMVAAEMPVAFNYNGVPFAVMMATPEDLEDFALGFSLSEGIVDHPQDLRVVAVDTFLEGASLQIEIPPERAAALDQRRRNLDGRSGCGVCGNESIEAVLRVPPVLQSALRIDVDALARALDALHARQPIAAQTGAVHAAGWADAQGMVQLVREDVGRHNALDKLIGALARARVDATQGFAVVTSRASYEMAMKAAQARIPLLAAISAPTALAISLADSAGLTLIGFARDHDCVVYSHPQRLDLGVAVGEPA</sequence>
<organism>
    <name type="scientific">Xanthomonas campestris pv. campestris (strain 8004)</name>
    <dbReference type="NCBI Taxonomy" id="314565"/>
    <lineage>
        <taxon>Bacteria</taxon>
        <taxon>Pseudomonadati</taxon>
        <taxon>Pseudomonadota</taxon>
        <taxon>Gammaproteobacteria</taxon>
        <taxon>Lysobacterales</taxon>
        <taxon>Lysobacteraceae</taxon>
        <taxon>Xanthomonas</taxon>
    </lineage>
</organism>
<name>FDHD_XANC8</name>
<dbReference type="EMBL" id="CP000050">
    <property type="protein sequence ID" value="AAY48824.1"/>
    <property type="molecule type" value="Genomic_DNA"/>
</dbReference>
<dbReference type="RefSeq" id="WP_011037498.1">
    <property type="nucleotide sequence ID" value="NZ_CP155948.1"/>
</dbReference>
<dbReference type="SMR" id="Q4UVU9"/>
<dbReference type="GeneID" id="58013066"/>
<dbReference type="KEGG" id="xcb:XC_1761"/>
<dbReference type="HOGENOM" id="CLU_056887_2_0_6"/>
<dbReference type="Proteomes" id="UP000000420">
    <property type="component" value="Chromosome"/>
</dbReference>
<dbReference type="GO" id="GO:0005737">
    <property type="term" value="C:cytoplasm"/>
    <property type="evidence" value="ECO:0007669"/>
    <property type="project" value="UniProtKB-SubCell"/>
</dbReference>
<dbReference type="GO" id="GO:0097163">
    <property type="term" value="F:sulfur carrier activity"/>
    <property type="evidence" value="ECO:0007669"/>
    <property type="project" value="UniProtKB-UniRule"/>
</dbReference>
<dbReference type="GO" id="GO:0016783">
    <property type="term" value="F:sulfurtransferase activity"/>
    <property type="evidence" value="ECO:0007669"/>
    <property type="project" value="InterPro"/>
</dbReference>
<dbReference type="GO" id="GO:0006777">
    <property type="term" value="P:Mo-molybdopterin cofactor biosynthetic process"/>
    <property type="evidence" value="ECO:0007669"/>
    <property type="project" value="UniProtKB-UniRule"/>
</dbReference>
<dbReference type="Gene3D" id="3.10.20.10">
    <property type="match status" value="1"/>
</dbReference>
<dbReference type="Gene3D" id="3.40.140.10">
    <property type="entry name" value="Cytidine Deaminase, domain 2"/>
    <property type="match status" value="1"/>
</dbReference>
<dbReference type="HAMAP" id="MF_00187">
    <property type="entry name" value="FdhD"/>
    <property type="match status" value="1"/>
</dbReference>
<dbReference type="InterPro" id="IPR016193">
    <property type="entry name" value="Cytidine_deaminase-like"/>
</dbReference>
<dbReference type="InterPro" id="IPR003786">
    <property type="entry name" value="FdhD"/>
</dbReference>
<dbReference type="NCBIfam" id="TIGR00129">
    <property type="entry name" value="fdhD_narQ"/>
    <property type="match status" value="1"/>
</dbReference>
<dbReference type="PANTHER" id="PTHR30592">
    <property type="entry name" value="FORMATE DEHYDROGENASE"/>
    <property type="match status" value="1"/>
</dbReference>
<dbReference type="PANTHER" id="PTHR30592:SF1">
    <property type="entry name" value="SULFUR CARRIER PROTEIN FDHD"/>
    <property type="match status" value="1"/>
</dbReference>
<dbReference type="Pfam" id="PF02634">
    <property type="entry name" value="FdhD-NarQ"/>
    <property type="match status" value="1"/>
</dbReference>
<dbReference type="PIRSF" id="PIRSF015626">
    <property type="entry name" value="FdhD"/>
    <property type="match status" value="1"/>
</dbReference>
<dbReference type="SUPFAM" id="SSF53927">
    <property type="entry name" value="Cytidine deaminase-like"/>
    <property type="match status" value="1"/>
</dbReference>
<reference key="1">
    <citation type="journal article" date="2005" name="Genome Res.">
        <title>Comparative and functional genomic analyses of the pathogenicity of phytopathogen Xanthomonas campestris pv. campestris.</title>
        <authorList>
            <person name="Qian W."/>
            <person name="Jia Y."/>
            <person name="Ren S.-X."/>
            <person name="He Y.-Q."/>
            <person name="Feng J.-X."/>
            <person name="Lu L.-F."/>
            <person name="Sun Q."/>
            <person name="Ying G."/>
            <person name="Tang D.-J."/>
            <person name="Tang H."/>
            <person name="Wu W."/>
            <person name="Hao P."/>
            <person name="Wang L."/>
            <person name="Jiang B.-L."/>
            <person name="Zeng S."/>
            <person name="Gu W.-Y."/>
            <person name="Lu G."/>
            <person name="Rong L."/>
            <person name="Tian Y."/>
            <person name="Yao Z."/>
            <person name="Fu G."/>
            <person name="Chen B."/>
            <person name="Fang R."/>
            <person name="Qiang B."/>
            <person name="Chen Z."/>
            <person name="Zhao G.-P."/>
            <person name="Tang J.-L."/>
            <person name="He C."/>
        </authorList>
    </citation>
    <scope>NUCLEOTIDE SEQUENCE [LARGE SCALE GENOMIC DNA]</scope>
    <source>
        <strain>8004</strain>
    </source>
</reference>
<keyword id="KW-0963">Cytoplasm</keyword>
<keyword id="KW-0501">Molybdenum cofactor biosynthesis</keyword>
<proteinExistence type="inferred from homology"/>
<accession>Q4UVU9</accession>
<evidence type="ECO:0000255" key="1">
    <source>
        <dbReference type="HAMAP-Rule" id="MF_00187"/>
    </source>
</evidence>
<gene>
    <name evidence="1" type="primary">fdhD</name>
    <name type="ordered locus">XC_1761</name>
</gene>